<name>LLDD_AZOC5</name>
<gene>
    <name evidence="1" type="primary">lldD</name>
    <name type="ordered locus">AZC_0822</name>
</gene>
<protein>
    <recommendedName>
        <fullName evidence="1">L-lactate dehydrogenase</fullName>
        <ecNumber evidence="1">1.1.-.-</ecNumber>
    </recommendedName>
</protein>
<comment type="function">
    <text evidence="1">Catalyzes the conversion of L-lactate to pyruvate. Is coupled to the respiratory chain.</text>
</comment>
<comment type="catalytic activity">
    <reaction evidence="1">
        <text>(S)-lactate + A = pyruvate + AH2</text>
        <dbReference type="Rhea" id="RHEA:45816"/>
        <dbReference type="ChEBI" id="CHEBI:13193"/>
        <dbReference type="ChEBI" id="CHEBI:15361"/>
        <dbReference type="ChEBI" id="CHEBI:16651"/>
        <dbReference type="ChEBI" id="CHEBI:17499"/>
    </reaction>
</comment>
<comment type="cofactor">
    <cofactor evidence="1">
        <name>FMN</name>
        <dbReference type="ChEBI" id="CHEBI:58210"/>
    </cofactor>
</comment>
<comment type="subcellular location">
    <subcellularLocation>
        <location evidence="1">Cell inner membrane</location>
        <topology evidence="1">Peripheral membrane protein</topology>
    </subcellularLocation>
</comment>
<comment type="similarity">
    <text evidence="1">Belongs to the FMN-dependent alpha-hydroxy acid dehydrogenase family.</text>
</comment>
<evidence type="ECO:0000255" key="1">
    <source>
        <dbReference type="HAMAP-Rule" id="MF_01559"/>
    </source>
</evidence>
<reference key="1">
    <citation type="submission" date="2007-04" db="EMBL/GenBank/DDBJ databases">
        <title>Complete genome sequence of the nitrogen-fixing bacterium Azorhizobium caulinodans ORS571.</title>
        <authorList>
            <person name="Lee K.B."/>
            <person name="Backer P.D."/>
            <person name="Aono T."/>
            <person name="Liu C.T."/>
            <person name="Suzuki S."/>
            <person name="Suzuki T."/>
            <person name="Kaneko T."/>
            <person name="Yamada M."/>
            <person name="Tabata S."/>
            <person name="Kupfer D.M."/>
            <person name="Najar F.Z."/>
            <person name="Wiley G.B."/>
            <person name="Roe B."/>
            <person name="Binnewies T."/>
            <person name="Ussery D."/>
            <person name="Vereecke D."/>
            <person name="Gevers D."/>
            <person name="Holsters M."/>
            <person name="Oyaizu H."/>
        </authorList>
    </citation>
    <scope>NUCLEOTIDE SEQUENCE [LARGE SCALE GENOMIC DNA]</scope>
    <source>
        <strain>ATCC 43989 / DSM 5975 / JCM 20966 / LMG 6465 / NBRC 14845 / NCIMB 13405 / ORS 571</strain>
    </source>
</reference>
<organism>
    <name type="scientific">Azorhizobium caulinodans (strain ATCC 43989 / DSM 5975 / JCM 20966 / LMG 6465 / NBRC 14845 / NCIMB 13405 / ORS 571)</name>
    <dbReference type="NCBI Taxonomy" id="438753"/>
    <lineage>
        <taxon>Bacteria</taxon>
        <taxon>Pseudomonadati</taxon>
        <taxon>Pseudomonadota</taxon>
        <taxon>Alphaproteobacteria</taxon>
        <taxon>Hyphomicrobiales</taxon>
        <taxon>Xanthobacteraceae</taxon>
        <taxon>Azorhizobium</taxon>
    </lineage>
</organism>
<keyword id="KW-0997">Cell inner membrane</keyword>
<keyword id="KW-1003">Cell membrane</keyword>
<keyword id="KW-0285">Flavoprotein</keyword>
<keyword id="KW-0288">FMN</keyword>
<keyword id="KW-0472">Membrane</keyword>
<keyword id="KW-0560">Oxidoreductase</keyword>
<keyword id="KW-1185">Reference proteome</keyword>
<feature type="chain" id="PRO_0000383413" description="L-lactate dehydrogenase">
    <location>
        <begin position="1"/>
        <end position="380"/>
    </location>
</feature>
<feature type="domain" description="FMN hydroxy acid dehydrogenase" evidence="1">
    <location>
        <begin position="1"/>
        <end position="380"/>
    </location>
</feature>
<feature type="active site" description="Proton acceptor" evidence="1">
    <location>
        <position position="275"/>
    </location>
</feature>
<feature type="binding site" evidence="1">
    <location>
        <position position="24"/>
    </location>
    <ligand>
        <name>substrate</name>
    </ligand>
</feature>
<feature type="binding site" evidence="1">
    <location>
        <position position="106"/>
    </location>
    <ligand>
        <name>FMN</name>
        <dbReference type="ChEBI" id="CHEBI:58210"/>
    </ligand>
</feature>
<feature type="binding site" evidence="1">
    <location>
        <position position="127"/>
    </location>
    <ligand>
        <name>FMN</name>
        <dbReference type="ChEBI" id="CHEBI:58210"/>
    </ligand>
</feature>
<feature type="binding site" evidence="1">
    <location>
        <position position="129"/>
    </location>
    <ligand>
        <name>substrate</name>
    </ligand>
</feature>
<feature type="binding site" evidence="1">
    <location>
        <position position="155"/>
    </location>
    <ligand>
        <name>FMN</name>
        <dbReference type="ChEBI" id="CHEBI:58210"/>
    </ligand>
</feature>
<feature type="binding site" evidence="1">
    <location>
        <position position="164"/>
    </location>
    <ligand>
        <name>substrate</name>
    </ligand>
</feature>
<feature type="binding site" evidence="1">
    <location>
        <position position="251"/>
    </location>
    <ligand>
        <name>FMN</name>
        <dbReference type="ChEBI" id="CHEBI:58210"/>
    </ligand>
</feature>
<feature type="binding site" evidence="1">
    <location>
        <position position="278"/>
    </location>
    <ligand>
        <name>substrate</name>
    </ligand>
</feature>
<feature type="binding site" evidence="1">
    <location>
        <begin position="306"/>
        <end position="330"/>
    </location>
    <ligand>
        <name>FMN</name>
        <dbReference type="ChEBI" id="CHEBI:58210"/>
    </ligand>
</feature>
<accession>A8HTC9</accession>
<sequence>MIISSPNDYRAAAKSRLPPFLFHYVDGGAYAEYTLRRNVEDLSHIALRQQVLRNVADLSLETELFGQKLTMPVALAPVGLTGMLARRGEVQAAKAAQAKGVPFTLSTVSVCPIEEVQSQCAKPIWFQLYVLKDRGFMRNALERAQAAGINTLIFTVDMPVPGARYRDAHSGMSGRSGPTRRVLQAMVHPRWALDVGLLGKPHDLGNISTYRGKPTNLADYIGWLAANFDPSISWKDLEWIRSFWKGPMIIKGILDPVDARDAVAFGADGIVVSNHGGRQLDGVLSSARALPAIADAVGDDLTVLADSGIRTGLDVVRMLALGAKGVLLGRAFAYALATHGQAGVANLLDLIEKEMRVAMALTGARSIAEITRDSLVGLPR</sequence>
<dbReference type="EC" id="1.1.-.-" evidence="1"/>
<dbReference type="EMBL" id="AP009384">
    <property type="protein sequence ID" value="BAF86820.1"/>
    <property type="molecule type" value="Genomic_DNA"/>
</dbReference>
<dbReference type="RefSeq" id="WP_012169353.1">
    <property type="nucleotide sequence ID" value="NC_009937.1"/>
</dbReference>
<dbReference type="SMR" id="A8HTC9"/>
<dbReference type="STRING" id="438753.AZC_0822"/>
<dbReference type="KEGG" id="azc:AZC_0822"/>
<dbReference type="eggNOG" id="COG1304">
    <property type="taxonomic scope" value="Bacteria"/>
</dbReference>
<dbReference type="HOGENOM" id="CLU_020639_0_0_5"/>
<dbReference type="Proteomes" id="UP000000270">
    <property type="component" value="Chromosome"/>
</dbReference>
<dbReference type="GO" id="GO:0005886">
    <property type="term" value="C:plasma membrane"/>
    <property type="evidence" value="ECO:0007669"/>
    <property type="project" value="UniProtKB-SubCell"/>
</dbReference>
<dbReference type="GO" id="GO:0010181">
    <property type="term" value="F:FMN binding"/>
    <property type="evidence" value="ECO:0007669"/>
    <property type="project" value="InterPro"/>
</dbReference>
<dbReference type="GO" id="GO:0004459">
    <property type="term" value="F:L-lactate dehydrogenase activity"/>
    <property type="evidence" value="ECO:0007669"/>
    <property type="project" value="UniProtKB-UniRule"/>
</dbReference>
<dbReference type="GO" id="GO:0009060">
    <property type="term" value="P:aerobic respiration"/>
    <property type="evidence" value="ECO:0007669"/>
    <property type="project" value="TreeGrafter"/>
</dbReference>
<dbReference type="GO" id="GO:0006089">
    <property type="term" value="P:lactate metabolic process"/>
    <property type="evidence" value="ECO:0007669"/>
    <property type="project" value="UniProtKB-UniRule"/>
</dbReference>
<dbReference type="CDD" id="cd02809">
    <property type="entry name" value="alpha_hydroxyacid_oxid_FMN"/>
    <property type="match status" value="1"/>
</dbReference>
<dbReference type="FunFam" id="3.20.20.70:FF:000029">
    <property type="entry name" value="L-lactate dehydrogenase"/>
    <property type="match status" value="1"/>
</dbReference>
<dbReference type="Gene3D" id="3.20.20.70">
    <property type="entry name" value="Aldolase class I"/>
    <property type="match status" value="1"/>
</dbReference>
<dbReference type="HAMAP" id="MF_01559">
    <property type="entry name" value="L_lact_dehydr"/>
    <property type="match status" value="1"/>
</dbReference>
<dbReference type="InterPro" id="IPR013785">
    <property type="entry name" value="Aldolase_TIM"/>
</dbReference>
<dbReference type="InterPro" id="IPR012133">
    <property type="entry name" value="Alpha-hydoxy_acid_DH_FMN"/>
</dbReference>
<dbReference type="InterPro" id="IPR000262">
    <property type="entry name" value="FMN-dep_DH"/>
</dbReference>
<dbReference type="InterPro" id="IPR037396">
    <property type="entry name" value="FMN_HAD"/>
</dbReference>
<dbReference type="InterPro" id="IPR008259">
    <property type="entry name" value="FMN_hydac_DH_AS"/>
</dbReference>
<dbReference type="InterPro" id="IPR020920">
    <property type="entry name" value="LldD"/>
</dbReference>
<dbReference type="NCBIfam" id="NF033901">
    <property type="entry name" value="L_lactate_LldD"/>
    <property type="match status" value="1"/>
</dbReference>
<dbReference type="NCBIfam" id="NF008398">
    <property type="entry name" value="PRK11197.1"/>
    <property type="match status" value="1"/>
</dbReference>
<dbReference type="PANTHER" id="PTHR10578:SF85">
    <property type="entry name" value="L-LACTATE DEHYDROGENASE"/>
    <property type="match status" value="1"/>
</dbReference>
<dbReference type="PANTHER" id="PTHR10578">
    <property type="entry name" value="S -2-HYDROXY-ACID OXIDASE-RELATED"/>
    <property type="match status" value="1"/>
</dbReference>
<dbReference type="Pfam" id="PF01070">
    <property type="entry name" value="FMN_dh"/>
    <property type="match status" value="1"/>
</dbReference>
<dbReference type="PIRSF" id="PIRSF000138">
    <property type="entry name" value="Al-hdrx_acd_dh"/>
    <property type="match status" value="1"/>
</dbReference>
<dbReference type="SUPFAM" id="SSF51395">
    <property type="entry name" value="FMN-linked oxidoreductases"/>
    <property type="match status" value="1"/>
</dbReference>
<dbReference type="PROSITE" id="PS00557">
    <property type="entry name" value="FMN_HYDROXY_ACID_DH_1"/>
    <property type="match status" value="1"/>
</dbReference>
<dbReference type="PROSITE" id="PS51349">
    <property type="entry name" value="FMN_HYDROXY_ACID_DH_2"/>
    <property type="match status" value="1"/>
</dbReference>
<proteinExistence type="inferred from homology"/>